<protein>
    <recommendedName>
        <fullName evidence="1">Probable tRNA sulfurtransferase</fullName>
        <ecNumber evidence="1">2.8.1.4</ecNumber>
    </recommendedName>
    <alternativeName>
        <fullName evidence="1">Sulfur carrier protein ThiS sulfurtransferase</fullName>
    </alternativeName>
    <alternativeName>
        <fullName evidence="1">Thiamine biosynthesis protein ThiI</fullName>
    </alternativeName>
    <alternativeName>
        <fullName evidence="1">tRNA 4-thiouridine synthase</fullName>
    </alternativeName>
</protein>
<comment type="function">
    <text evidence="1">Catalyzes the ATP-dependent transfer of a sulfur to tRNA to produce 4-thiouridine in position 8 of tRNAs, which functions as a near-UV photosensor. Also catalyzes the transfer of sulfur to the sulfur carrier protein ThiS, forming ThiS-thiocarboxylate. This is a step in the synthesis of thiazole, in the thiamine biosynthesis pathway. The sulfur is donated as persulfide by IscS.</text>
</comment>
<comment type="catalytic activity">
    <reaction evidence="1">
        <text>[ThiI sulfur-carrier protein]-S-sulfanyl-L-cysteine + a uridine in tRNA + 2 reduced [2Fe-2S]-[ferredoxin] + ATP + H(+) = [ThiI sulfur-carrier protein]-L-cysteine + a 4-thiouridine in tRNA + 2 oxidized [2Fe-2S]-[ferredoxin] + AMP + diphosphate</text>
        <dbReference type="Rhea" id="RHEA:24176"/>
        <dbReference type="Rhea" id="RHEA-COMP:10000"/>
        <dbReference type="Rhea" id="RHEA-COMP:10001"/>
        <dbReference type="Rhea" id="RHEA-COMP:13337"/>
        <dbReference type="Rhea" id="RHEA-COMP:13338"/>
        <dbReference type="Rhea" id="RHEA-COMP:13339"/>
        <dbReference type="Rhea" id="RHEA-COMP:13340"/>
        <dbReference type="ChEBI" id="CHEBI:15378"/>
        <dbReference type="ChEBI" id="CHEBI:29950"/>
        <dbReference type="ChEBI" id="CHEBI:30616"/>
        <dbReference type="ChEBI" id="CHEBI:33019"/>
        <dbReference type="ChEBI" id="CHEBI:33737"/>
        <dbReference type="ChEBI" id="CHEBI:33738"/>
        <dbReference type="ChEBI" id="CHEBI:61963"/>
        <dbReference type="ChEBI" id="CHEBI:65315"/>
        <dbReference type="ChEBI" id="CHEBI:136798"/>
        <dbReference type="ChEBI" id="CHEBI:456215"/>
        <dbReference type="EC" id="2.8.1.4"/>
    </reaction>
</comment>
<comment type="catalytic activity">
    <reaction evidence="1">
        <text>[ThiS sulfur-carrier protein]-C-terminal Gly-Gly-AMP + S-sulfanyl-L-cysteinyl-[cysteine desulfurase] + AH2 = [ThiS sulfur-carrier protein]-C-terminal-Gly-aminoethanethioate + L-cysteinyl-[cysteine desulfurase] + A + AMP + 2 H(+)</text>
        <dbReference type="Rhea" id="RHEA:43340"/>
        <dbReference type="Rhea" id="RHEA-COMP:12157"/>
        <dbReference type="Rhea" id="RHEA-COMP:12158"/>
        <dbReference type="Rhea" id="RHEA-COMP:12910"/>
        <dbReference type="Rhea" id="RHEA-COMP:19908"/>
        <dbReference type="ChEBI" id="CHEBI:13193"/>
        <dbReference type="ChEBI" id="CHEBI:15378"/>
        <dbReference type="ChEBI" id="CHEBI:17499"/>
        <dbReference type="ChEBI" id="CHEBI:29950"/>
        <dbReference type="ChEBI" id="CHEBI:61963"/>
        <dbReference type="ChEBI" id="CHEBI:90618"/>
        <dbReference type="ChEBI" id="CHEBI:232372"/>
        <dbReference type="ChEBI" id="CHEBI:456215"/>
    </reaction>
</comment>
<comment type="pathway">
    <text evidence="1">Cofactor biosynthesis; thiamine diphosphate biosynthesis.</text>
</comment>
<comment type="subcellular location">
    <subcellularLocation>
        <location evidence="1">Cytoplasm</location>
    </subcellularLocation>
</comment>
<comment type="similarity">
    <text evidence="1">Belongs to the ThiI family.</text>
</comment>
<comment type="sequence caution" evidence="2">
    <conflict type="erroneous initiation">
        <sequence resource="EMBL-CDS" id="AAM79157"/>
    </conflict>
</comment>
<feature type="chain" id="PRO_0000154877" description="Probable tRNA sulfurtransferase">
    <location>
        <begin position="1"/>
        <end position="404"/>
    </location>
</feature>
<feature type="domain" description="THUMP" evidence="1">
    <location>
        <begin position="60"/>
        <end position="165"/>
    </location>
</feature>
<feature type="binding site" evidence="1">
    <location>
        <begin position="183"/>
        <end position="184"/>
    </location>
    <ligand>
        <name>ATP</name>
        <dbReference type="ChEBI" id="CHEBI:30616"/>
    </ligand>
</feature>
<feature type="binding site" evidence="1">
    <location>
        <begin position="208"/>
        <end position="209"/>
    </location>
    <ligand>
        <name>ATP</name>
        <dbReference type="ChEBI" id="CHEBI:30616"/>
    </ligand>
</feature>
<feature type="binding site" evidence="1">
    <location>
        <position position="265"/>
    </location>
    <ligand>
        <name>ATP</name>
        <dbReference type="ChEBI" id="CHEBI:30616"/>
    </ligand>
</feature>
<feature type="binding site" evidence="1">
    <location>
        <position position="287"/>
    </location>
    <ligand>
        <name>ATP</name>
        <dbReference type="ChEBI" id="CHEBI:30616"/>
    </ligand>
</feature>
<feature type="binding site" evidence="1">
    <location>
        <position position="296"/>
    </location>
    <ligand>
        <name>ATP</name>
        <dbReference type="ChEBI" id="CHEBI:30616"/>
    </ligand>
</feature>
<keyword id="KW-0067">ATP-binding</keyword>
<keyword id="KW-0963">Cytoplasm</keyword>
<keyword id="KW-0547">Nucleotide-binding</keyword>
<keyword id="KW-0694">RNA-binding</keyword>
<keyword id="KW-0784">Thiamine biosynthesis</keyword>
<keyword id="KW-0808">Transferase</keyword>
<keyword id="KW-0820">tRNA-binding</keyword>
<evidence type="ECO:0000255" key="1">
    <source>
        <dbReference type="HAMAP-Rule" id="MF_00021"/>
    </source>
</evidence>
<evidence type="ECO:0000305" key="2"/>
<name>THII_STRP3</name>
<gene>
    <name evidence="1" type="primary">thiI</name>
    <name type="ordered locus">SpyM3_0550</name>
</gene>
<proteinExistence type="inferred from homology"/>
<accession>P0DF94</accession>
<accession>Q878I5</accession>
<accession>Q8K7Z0</accession>
<dbReference type="EC" id="2.8.1.4" evidence="1"/>
<dbReference type="EMBL" id="AE014074">
    <property type="protein sequence ID" value="AAM79157.1"/>
    <property type="status" value="ALT_INIT"/>
    <property type="molecule type" value="Genomic_DNA"/>
</dbReference>
<dbReference type="RefSeq" id="WP_011106827.1">
    <property type="nucleotide sequence ID" value="NC_004070.1"/>
</dbReference>
<dbReference type="SMR" id="P0DF94"/>
<dbReference type="KEGG" id="spg:SpyM3_0550"/>
<dbReference type="HOGENOM" id="CLU_037952_4_0_9"/>
<dbReference type="UniPathway" id="UPA00060"/>
<dbReference type="Proteomes" id="UP000000564">
    <property type="component" value="Chromosome"/>
</dbReference>
<dbReference type="GO" id="GO:0005829">
    <property type="term" value="C:cytosol"/>
    <property type="evidence" value="ECO:0007669"/>
    <property type="project" value="TreeGrafter"/>
</dbReference>
<dbReference type="GO" id="GO:0005524">
    <property type="term" value="F:ATP binding"/>
    <property type="evidence" value="ECO:0007669"/>
    <property type="project" value="UniProtKB-UniRule"/>
</dbReference>
<dbReference type="GO" id="GO:0004810">
    <property type="term" value="F:CCA tRNA nucleotidyltransferase activity"/>
    <property type="evidence" value="ECO:0007669"/>
    <property type="project" value="InterPro"/>
</dbReference>
<dbReference type="GO" id="GO:0000049">
    <property type="term" value="F:tRNA binding"/>
    <property type="evidence" value="ECO:0007669"/>
    <property type="project" value="UniProtKB-UniRule"/>
</dbReference>
<dbReference type="GO" id="GO:0140741">
    <property type="term" value="F:tRNA-uracil-4 sulfurtransferase activity"/>
    <property type="evidence" value="ECO:0007669"/>
    <property type="project" value="UniProtKB-EC"/>
</dbReference>
<dbReference type="GO" id="GO:0009228">
    <property type="term" value="P:thiamine biosynthetic process"/>
    <property type="evidence" value="ECO:0007669"/>
    <property type="project" value="UniProtKB-KW"/>
</dbReference>
<dbReference type="GO" id="GO:0009229">
    <property type="term" value="P:thiamine diphosphate biosynthetic process"/>
    <property type="evidence" value="ECO:0007669"/>
    <property type="project" value="UniProtKB-UniRule"/>
</dbReference>
<dbReference type="GO" id="GO:0052837">
    <property type="term" value="P:thiazole biosynthetic process"/>
    <property type="evidence" value="ECO:0007669"/>
    <property type="project" value="TreeGrafter"/>
</dbReference>
<dbReference type="GO" id="GO:0002937">
    <property type="term" value="P:tRNA 4-thiouridine biosynthesis"/>
    <property type="evidence" value="ECO:0007669"/>
    <property type="project" value="TreeGrafter"/>
</dbReference>
<dbReference type="CDD" id="cd01712">
    <property type="entry name" value="PPase_ThiI"/>
    <property type="match status" value="1"/>
</dbReference>
<dbReference type="CDD" id="cd11716">
    <property type="entry name" value="THUMP_ThiI"/>
    <property type="match status" value="1"/>
</dbReference>
<dbReference type="FunFam" id="3.40.50.620:FF:000053">
    <property type="entry name" value="Probable tRNA sulfurtransferase"/>
    <property type="match status" value="1"/>
</dbReference>
<dbReference type="Gene3D" id="3.30.2130.30">
    <property type="match status" value="1"/>
</dbReference>
<dbReference type="Gene3D" id="3.40.50.620">
    <property type="entry name" value="HUPs"/>
    <property type="match status" value="1"/>
</dbReference>
<dbReference type="HAMAP" id="MF_00021">
    <property type="entry name" value="ThiI"/>
    <property type="match status" value="1"/>
</dbReference>
<dbReference type="InterPro" id="IPR014729">
    <property type="entry name" value="Rossmann-like_a/b/a_fold"/>
</dbReference>
<dbReference type="InterPro" id="IPR020536">
    <property type="entry name" value="ThiI_AANH"/>
</dbReference>
<dbReference type="InterPro" id="IPR054173">
    <property type="entry name" value="ThiI_fer"/>
</dbReference>
<dbReference type="InterPro" id="IPR049961">
    <property type="entry name" value="ThiI_N"/>
</dbReference>
<dbReference type="InterPro" id="IPR004114">
    <property type="entry name" value="THUMP_dom"/>
</dbReference>
<dbReference type="InterPro" id="IPR049962">
    <property type="entry name" value="THUMP_ThiI"/>
</dbReference>
<dbReference type="InterPro" id="IPR003720">
    <property type="entry name" value="tRNA_STrfase"/>
</dbReference>
<dbReference type="InterPro" id="IPR050102">
    <property type="entry name" value="tRNA_sulfurtransferase_ThiI"/>
</dbReference>
<dbReference type="NCBIfam" id="TIGR00342">
    <property type="entry name" value="tRNA uracil 4-sulfurtransferase ThiI"/>
    <property type="match status" value="1"/>
</dbReference>
<dbReference type="PANTHER" id="PTHR43209">
    <property type="entry name" value="TRNA SULFURTRANSFERASE"/>
    <property type="match status" value="1"/>
</dbReference>
<dbReference type="PANTHER" id="PTHR43209:SF1">
    <property type="entry name" value="TRNA SULFURTRANSFERASE"/>
    <property type="match status" value="1"/>
</dbReference>
<dbReference type="Pfam" id="PF02568">
    <property type="entry name" value="ThiI"/>
    <property type="match status" value="1"/>
</dbReference>
<dbReference type="Pfam" id="PF22025">
    <property type="entry name" value="ThiI_fer"/>
    <property type="match status" value="1"/>
</dbReference>
<dbReference type="Pfam" id="PF02926">
    <property type="entry name" value="THUMP"/>
    <property type="match status" value="1"/>
</dbReference>
<dbReference type="SMART" id="SM00981">
    <property type="entry name" value="THUMP"/>
    <property type="match status" value="1"/>
</dbReference>
<dbReference type="SUPFAM" id="SSF52402">
    <property type="entry name" value="Adenine nucleotide alpha hydrolases-like"/>
    <property type="match status" value="1"/>
</dbReference>
<dbReference type="SUPFAM" id="SSF143437">
    <property type="entry name" value="THUMP domain-like"/>
    <property type="match status" value="1"/>
</dbReference>
<dbReference type="PROSITE" id="PS51165">
    <property type="entry name" value="THUMP"/>
    <property type="match status" value="1"/>
</dbReference>
<reference key="1">
    <citation type="journal article" date="2002" name="Proc. Natl. Acad. Sci. U.S.A.">
        <title>Genome sequence of a serotype M3 strain of group A Streptococcus: phage-encoded toxins, the high-virulence phenotype, and clone emergence.</title>
        <authorList>
            <person name="Beres S.B."/>
            <person name="Sylva G.L."/>
            <person name="Barbian K.D."/>
            <person name="Lei B."/>
            <person name="Hoff J.S."/>
            <person name="Mammarella N.D."/>
            <person name="Liu M.-Y."/>
            <person name="Smoot J.C."/>
            <person name="Porcella S.F."/>
            <person name="Parkins L.D."/>
            <person name="Campbell D.S."/>
            <person name="Smith T.M."/>
            <person name="McCormick J.K."/>
            <person name="Leung D.Y.M."/>
            <person name="Schlievert P.M."/>
            <person name="Musser J.M."/>
        </authorList>
    </citation>
    <scope>NUCLEOTIDE SEQUENCE [LARGE SCALE GENOMIC DNA]</scope>
    <source>
        <strain>ATCC BAA-595 / MGAS315</strain>
    </source>
</reference>
<organism>
    <name type="scientific">Streptococcus pyogenes serotype M3 (strain ATCC BAA-595 / MGAS315)</name>
    <dbReference type="NCBI Taxonomy" id="198466"/>
    <lineage>
        <taxon>Bacteria</taxon>
        <taxon>Bacillati</taxon>
        <taxon>Bacillota</taxon>
        <taxon>Bacilli</taxon>
        <taxon>Lactobacillales</taxon>
        <taxon>Streptococcaceae</taxon>
        <taxon>Streptococcus</taxon>
    </lineage>
</organism>
<sequence length="404" mass="44784">MDYSEIMVRHGELSTKGKNRMRFINKLKNNIQDVLAPFPAITVRSDRDRTHVSLNGTDYQPIVEALKLVFGVQALSPVYKLEKSVPLLVTAVQDIMTSLYRDGLTFKIATKRSDHAFELDSRELNSLLGGAVFEVLPNIQAQMKHPDVTLKVEIRDEAAYISYEEIKGAGGLPVGTSGKGMLMLSGGIDSPVAGYLALKRGLDIEVVHFASPPYTSPGALAKAQDLTRRLTRFGGNIQFIEVPFTEIQEEIKNKAPEAYLMTLTRRFMMRITDAIREQRKGLVIVNGESLGQVASQTLESMQAINAVTSTPIIRPVVTMDKLEIIEMAQAIDTFDISIQPFEDCCTIFAPDRPKTNPKLGNAEKYEERFDIDGLVQRAVSGIVVTEITPEIVNDEVENLIDALL</sequence>